<comment type="function">
    <text evidence="4">Key regulator of striated muscle performance by acting as the major Ca(2+) ATPase responsible for the reuptake of cytosolic Ca(2+) into the sarcoplasmic reticulum. Catalyzes the hydrolysis of ATP coupled with the translocation of calcium from the cytosol to the sarcoplasmic reticulum lumen. Contributes to calcium sequestration involved in muscular excitation/contraction.</text>
</comment>
<comment type="catalytic activity">
    <reaction evidence="3">
        <text>Ca(2+)(in) + ATP + H2O = Ca(2+)(out) + ADP + phosphate + H(+)</text>
        <dbReference type="Rhea" id="RHEA:18105"/>
        <dbReference type="ChEBI" id="CHEBI:15377"/>
        <dbReference type="ChEBI" id="CHEBI:15378"/>
        <dbReference type="ChEBI" id="CHEBI:29108"/>
        <dbReference type="ChEBI" id="CHEBI:30616"/>
        <dbReference type="ChEBI" id="CHEBI:43474"/>
        <dbReference type="ChEBI" id="CHEBI:456216"/>
        <dbReference type="EC" id="7.2.2.10"/>
    </reaction>
    <physiologicalReaction direction="left-to-right" evidence="3">
        <dbReference type="Rhea" id="RHEA:18106"/>
    </physiologicalReaction>
</comment>
<comment type="cofactor">
    <cofactor evidence="3">
        <name>Mg(2+)</name>
        <dbReference type="ChEBI" id="CHEBI:18420"/>
    </cofactor>
</comment>
<comment type="activity regulation">
    <text evidence="3 4">Inhibited by sarcolipin (SLN) and myoregulin (MRLN). Also shown to be inhibited by phospholamban (PLN) in vitro. Enhanced by DWORF; DWORF increases activity by displacing sarcolipin (SLN), phospholamban (PLN) and myoregulin (MRLN).</text>
</comment>
<comment type="subunit">
    <text evidence="2 4">Interacts with sarcolipin (SLN) (By similarity). Interacts with phospholamban (PLN) (By similarity). Interacts with myoregulin (MRLN). Interacts with DWORF (By similarity). Interacts with VMP1 (By similarity).</text>
</comment>
<comment type="subcellular location">
    <subcellularLocation>
        <location evidence="3">Endoplasmic reticulum membrane</location>
        <topology evidence="3">Multi-pass membrane protein</topology>
    </subcellularLocation>
    <subcellularLocation>
        <location evidence="3">Sarcoplasmic reticulum membrane</location>
        <topology evidence="3">Multi-pass membrane protein</topology>
    </subcellularLocation>
</comment>
<comment type="domain">
    <text evidence="3">Ca(2+) and ATP binding cause major rearrangements of the cytoplasmic and transmembrane domains. According to the E1-E2 model, Ca(2+) binding to the cytosolic domain of the pump in the high-affinity E1 conformation is followed by the ATP-dependent phosphorylation of the active site Asp, giving rise to E1P. A conformational change of the phosphoenzyme gives rise to the low-affinity E2P state that exposes the Ca(2+) ions to the lumenal side and promotes Ca(2+) release. Dephosphorylation of the active site Asp mediates the subsequent return to the E1 conformation.</text>
</comment>
<comment type="domain">
    <text evidence="3">PLN and SLN both have a single transmembrane helix; both occupy a similar binding site on ATP2A1 that is situated between the ATP2A1 transmembrane helices.</text>
</comment>
<comment type="similarity">
    <text evidence="5">Belongs to the cation transport ATPase (P-type) (TC 3.A.3) family. Type IIA subfamily.</text>
</comment>
<feature type="chain" id="PRO_0000046193" description="Sarcoplasmic/endoplasmic reticulum calcium ATPase 1">
    <location>
        <begin position="1"/>
        <end position="994"/>
    </location>
</feature>
<feature type="topological domain" description="Cytoplasmic" evidence="5">
    <location>
        <begin position="1"/>
        <end position="48"/>
    </location>
</feature>
<feature type="transmembrane region" description="Helical; Name=1" evidence="3">
    <location>
        <begin position="49"/>
        <end position="69"/>
    </location>
</feature>
<feature type="topological domain" description="Lumenal" evidence="5">
    <location>
        <begin position="70"/>
        <end position="89"/>
    </location>
</feature>
<feature type="transmembrane region" description="Helical; Name=2" evidence="3">
    <location>
        <begin position="90"/>
        <end position="110"/>
    </location>
</feature>
<feature type="topological domain" description="Cytoplasmic" evidence="5">
    <location>
        <begin position="111"/>
        <end position="253"/>
    </location>
</feature>
<feature type="transmembrane region" description="Helical; Name=3" evidence="3">
    <location>
        <begin position="254"/>
        <end position="273"/>
    </location>
</feature>
<feature type="topological domain" description="Lumenal" evidence="5">
    <location>
        <begin position="274"/>
        <end position="295"/>
    </location>
</feature>
<feature type="transmembrane region" description="Helical; Name=4" evidence="3">
    <location>
        <begin position="296"/>
        <end position="313"/>
    </location>
</feature>
<feature type="topological domain" description="Cytoplasmic" evidence="5">
    <location>
        <begin position="314"/>
        <end position="757"/>
    </location>
</feature>
<feature type="transmembrane region" description="Helical; Name=5" evidence="3">
    <location>
        <begin position="758"/>
        <end position="777"/>
    </location>
</feature>
<feature type="topological domain" description="Lumenal" evidence="5">
    <location>
        <begin position="778"/>
        <end position="787"/>
    </location>
</feature>
<feature type="transmembrane region" description="Helical; Name=6" evidence="3">
    <location>
        <begin position="788"/>
        <end position="808"/>
    </location>
</feature>
<feature type="topological domain" description="Cytoplasmic" evidence="5">
    <location>
        <begin position="809"/>
        <end position="828"/>
    </location>
</feature>
<feature type="transmembrane region" description="Helical; Name=7" evidence="3">
    <location>
        <begin position="829"/>
        <end position="851"/>
    </location>
</feature>
<feature type="topological domain" description="Lumenal" evidence="5">
    <location>
        <begin position="852"/>
        <end position="897"/>
    </location>
</feature>
<feature type="transmembrane region" description="Helical; Name=8" evidence="3">
    <location>
        <begin position="898"/>
        <end position="917"/>
    </location>
</feature>
<feature type="topological domain" description="Cytoplasmic" evidence="5">
    <location>
        <begin position="918"/>
        <end position="930"/>
    </location>
</feature>
<feature type="transmembrane region" description="Helical; Name=9" evidence="3">
    <location>
        <begin position="931"/>
        <end position="949"/>
    </location>
</feature>
<feature type="topological domain" description="Lumenal" evidence="5">
    <location>
        <begin position="950"/>
        <end position="964"/>
    </location>
</feature>
<feature type="transmembrane region" description="Helical; Name=10" evidence="3">
    <location>
        <begin position="965"/>
        <end position="985"/>
    </location>
</feature>
<feature type="topological domain" description="Cytoplasmic" evidence="5">
    <location>
        <begin position="986"/>
        <end position="994"/>
    </location>
</feature>
<feature type="region of interest" description="Interaction with PLN" evidence="3">
    <location>
        <begin position="788"/>
        <end position="808"/>
    </location>
</feature>
<feature type="region of interest" description="Interaction with PLN" evidence="3">
    <location>
        <begin position="932"/>
        <end position="943"/>
    </location>
</feature>
<feature type="active site" description="4-aspartylphosphate intermediate" evidence="3">
    <location>
        <position position="351"/>
    </location>
</feature>
<feature type="binding site" evidence="3">
    <location>
        <position position="304"/>
    </location>
    <ligand>
        <name>Ca(2+)</name>
        <dbReference type="ChEBI" id="CHEBI:29108"/>
        <label>1</label>
    </ligand>
</feature>
<feature type="binding site" evidence="3">
    <location>
        <position position="305"/>
    </location>
    <ligand>
        <name>Ca(2+)</name>
        <dbReference type="ChEBI" id="CHEBI:29108"/>
        <label>1</label>
    </ligand>
</feature>
<feature type="binding site" evidence="3">
    <location>
        <position position="307"/>
    </location>
    <ligand>
        <name>Ca(2+)</name>
        <dbReference type="ChEBI" id="CHEBI:29108"/>
        <label>1</label>
    </ligand>
</feature>
<feature type="binding site" evidence="3">
    <location>
        <position position="309"/>
    </location>
    <ligand>
        <name>Ca(2+)</name>
        <dbReference type="ChEBI" id="CHEBI:29108"/>
        <label>1</label>
    </ligand>
</feature>
<feature type="binding site" evidence="3">
    <location>
        <position position="351"/>
    </location>
    <ligand>
        <name>Mg(2+)</name>
        <dbReference type="ChEBI" id="CHEBI:18420"/>
    </ligand>
</feature>
<feature type="binding site" evidence="3">
    <location>
        <position position="353"/>
    </location>
    <ligand>
        <name>ATP</name>
        <dbReference type="ChEBI" id="CHEBI:30616"/>
    </ligand>
</feature>
<feature type="binding site" evidence="3">
    <location>
        <position position="353"/>
    </location>
    <ligand>
        <name>Mg(2+)</name>
        <dbReference type="ChEBI" id="CHEBI:18420"/>
    </ligand>
</feature>
<feature type="binding site" evidence="3">
    <location>
        <position position="442"/>
    </location>
    <ligand>
        <name>ATP</name>
        <dbReference type="ChEBI" id="CHEBI:30616"/>
    </ligand>
</feature>
<feature type="binding site" evidence="3">
    <location>
        <position position="489"/>
    </location>
    <ligand>
        <name>ATP</name>
        <dbReference type="ChEBI" id="CHEBI:30616"/>
    </ligand>
</feature>
<feature type="binding site" evidence="3">
    <location>
        <position position="515"/>
    </location>
    <ligand>
        <name>ATP</name>
        <dbReference type="ChEBI" id="CHEBI:30616"/>
    </ligand>
</feature>
<feature type="binding site" evidence="3">
    <location>
        <position position="560"/>
    </location>
    <ligand>
        <name>ATP</name>
        <dbReference type="ChEBI" id="CHEBI:30616"/>
    </ligand>
</feature>
<feature type="binding site" evidence="3">
    <location>
        <position position="625"/>
    </location>
    <ligand>
        <name>ATP</name>
        <dbReference type="ChEBI" id="CHEBI:30616"/>
    </ligand>
</feature>
<feature type="binding site" evidence="3">
    <location>
        <position position="626"/>
    </location>
    <ligand>
        <name>ATP</name>
        <dbReference type="ChEBI" id="CHEBI:30616"/>
    </ligand>
</feature>
<feature type="binding site" evidence="3">
    <location>
        <position position="627"/>
    </location>
    <ligand>
        <name>ATP</name>
        <dbReference type="ChEBI" id="CHEBI:30616"/>
    </ligand>
</feature>
<feature type="binding site" evidence="3">
    <location>
        <position position="678"/>
    </location>
    <ligand>
        <name>ATP</name>
        <dbReference type="ChEBI" id="CHEBI:30616"/>
    </ligand>
</feature>
<feature type="binding site" evidence="3">
    <location>
        <position position="684"/>
    </location>
    <ligand>
        <name>ATP</name>
        <dbReference type="ChEBI" id="CHEBI:30616"/>
    </ligand>
</feature>
<feature type="binding site" evidence="3">
    <location>
        <position position="703"/>
    </location>
    <ligand>
        <name>Mg(2+)</name>
        <dbReference type="ChEBI" id="CHEBI:18420"/>
    </ligand>
</feature>
<feature type="binding site" evidence="3">
    <location>
        <position position="706"/>
    </location>
    <ligand>
        <name>ATP</name>
        <dbReference type="ChEBI" id="CHEBI:30616"/>
    </ligand>
</feature>
<feature type="binding site" evidence="3">
    <location>
        <position position="768"/>
    </location>
    <ligand>
        <name>Ca(2+)</name>
        <dbReference type="ChEBI" id="CHEBI:29108"/>
        <label>2</label>
    </ligand>
</feature>
<feature type="binding site" evidence="3">
    <location>
        <position position="771"/>
    </location>
    <ligand>
        <name>Ca(2+)</name>
        <dbReference type="ChEBI" id="CHEBI:29108"/>
        <label>2</label>
    </ligand>
</feature>
<feature type="binding site" evidence="3">
    <location>
        <position position="796"/>
    </location>
    <ligand>
        <name>Ca(2+)</name>
        <dbReference type="ChEBI" id="CHEBI:29108"/>
        <label>1</label>
    </ligand>
</feature>
<feature type="binding site" evidence="3">
    <location>
        <position position="799"/>
    </location>
    <ligand>
        <name>Ca(2+)</name>
        <dbReference type="ChEBI" id="CHEBI:29108"/>
        <label>2</label>
    </ligand>
</feature>
<feature type="binding site" evidence="3">
    <location>
        <position position="800"/>
    </location>
    <ligand>
        <name>Ca(2+)</name>
        <dbReference type="ChEBI" id="CHEBI:29108"/>
        <label>1</label>
    </ligand>
</feature>
<feature type="binding site" evidence="3">
    <location>
        <position position="800"/>
    </location>
    <ligand>
        <name>Ca(2+)</name>
        <dbReference type="ChEBI" id="CHEBI:29108"/>
        <label>2</label>
    </ligand>
</feature>
<feature type="binding site" evidence="3">
    <location>
        <position position="908"/>
    </location>
    <ligand>
        <name>Ca(2+)</name>
        <dbReference type="ChEBI" id="CHEBI:29108"/>
        <label>2</label>
    </ligand>
</feature>
<feature type="disulfide bond" evidence="1">
    <location>
        <begin position="876"/>
        <end position="888"/>
    </location>
</feature>
<sequence length="994" mass="109288">MEQAHTKTTEECLAYFGVNENTGLSLDQVKKNFDKFGPNELPAEEGKSLWELVAEQFEDLLVRILLLAAIISFVLAWFEEGEETVTAFVEPFVILLILIANAVVGVWQERNAEDAIEALKEYEPEMGKVYRSDRKSVQRIKARELVPGDIVEVAVGDKVPADIRLISIKSTTLRIDQSILTGESVSVIKHTEVVPDTRAVNQDKKNMLFSGTNVGAGKAVGVVIATGPNTEIGKIRDEMAATEQEKTPLQQKLDEFGEQLSKVISLICVAVWLINIGHFNDPIHGGSWIKGAIYYFKIAVALAVAAIPEGLPAVITTCLALGTRRMAKKNAIVRSLPSVETLGCTSVICSDKTGTLTTNQMSVCRMFVIDKVEGDVTSLNEFTITGSTYAPEGDVQKNDKNVKAGQYDGLVELATICALCNDSSLDFNESKGVFEKVGEATETALTTLVEKMNVFNTDVKSLSKVERANACNSVIKQLMKKEFTLEFSRDRKSMSVYCIPAKASRAAVGNKMFVKGAPEGVIDRCNYVRVGTTRVPLTSAIKDKILSVVKEWGTGRDTLRCLALATRDTPPKREDMVLDEATRFIEYETDLTFVGCVGMLDPPRKEVMGSIQLCREAGIRVIMITGDNKGTAIAICRRIGIFGEDDDVSGRAFTGREFDDLPPAEQREACKRASCFARVEPAHKSKIVEFLQSFDEITAMTGDGVNDAPALKKAEIGIAMGSGTAVAKTASEMVLADDNFSTIVAAVEEGRAIYNNMKQFIRYLISSNVGEVVCIFLTAALGLPEALIPVQLLWVNLVTDGLPATALGFNPPDLDIMDRPPRSPKEPLISGWLFFRYMAIGGYVGAATVGAAAWWFMYADDGPNVTFYQLSHFMQCTEDNPDFEGHECEIFESPVPMTMALSVLVTIEMCNALNSLSENQSLIRMPPWSNFWLLGSICLSMSLHFLILYVEPLPMIFKLTPLNVEQWFIVLKMSFPVILLDELLKFVARNYLEG</sequence>
<keyword id="KW-0067">ATP-binding</keyword>
<keyword id="KW-0106">Calcium</keyword>
<keyword id="KW-0109">Calcium transport</keyword>
<keyword id="KW-1015">Disulfide bond</keyword>
<keyword id="KW-0256">Endoplasmic reticulum</keyword>
<keyword id="KW-0406">Ion transport</keyword>
<keyword id="KW-0460">Magnesium</keyword>
<keyword id="KW-0472">Membrane</keyword>
<keyword id="KW-0479">Metal-binding</keyword>
<keyword id="KW-0547">Nucleotide-binding</keyword>
<keyword id="KW-0597">Phosphoprotein</keyword>
<keyword id="KW-0703">Sarcoplasmic reticulum</keyword>
<keyword id="KW-1278">Translocase</keyword>
<keyword id="KW-0812">Transmembrane</keyword>
<keyword id="KW-1133">Transmembrane helix</keyword>
<keyword id="KW-0813">Transport</keyword>
<dbReference type="EC" id="7.2.2.10" evidence="3"/>
<dbReference type="EMBL" id="X63009">
    <property type="protein sequence ID" value="CAA44737.1"/>
    <property type="molecule type" value="mRNA"/>
</dbReference>
<dbReference type="PIR" id="S24359">
    <property type="entry name" value="S24359"/>
</dbReference>
<dbReference type="SMR" id="Q92105"/>
<dbReference type="GO" id="GO:0005783">
    <property type="term" value="C:endoplasmic reticulum"/>
    <property type="evidence" value="ECO:0000250"/>
    <property type="project" value="UniProtKB"/>
</dbReference>
<dbReference type="GO" id="GO:0005789">
    <property type="term" value="C:endoplasmic reticulum membrane"/>
    <property type="evidence" value="ECO:0000250"/>
    <property type="project" value="UniProtKB"/>
</dbReference>
<dbReference type="GO" id="GO:0005793">
    <property type="term" value="C:endoplasmic reticulum-Golgi intermediate compartment"/>
    <property type="evidence" value="ECO:0000250"/>
    <property type="project" value="UniProtKB"/>
</dbReference>
<dbReference type="GO" id="GO:0031673">
    <property type="term" value="C:H zone"/>
    <property type="evidence" value="ECO:0000250"/>
    <property type="project" value="UniProtKB"/>
</dbReference>
<dbReference type="GO" id="GO:0031674">
    <property type="term" value="C:I band"/>
    <property type="evidence" value="ECO:0000250"/>
    <property type="project" value="UniProtKB"/>
</dbReference>
<dbReference type="GO" id="GO:0016020">
    <property type="term" value="C:membrane"/>
    <property type="evidence" value="ECO:0000250"/>
    <property type="project" value="UniProtKB"/>
</dbReference>
<dbReference type="GO" id="GO:0048471">
    <property type="term" value="C:perinuclear region of cytoplasm"/>
    <property type="evidence" value="ECO:0000250"/>
    <property type="project" value="UniProtKB"/>
</dbReference>
<dbReference type="GO" id="GO:0016529">
    <property type="term" value="C:sarcoplasmic reticulum"/>
    <property type="evidence" value="ECO:0000250"/>
    <property type="project" value="UniProtKB"/>
</dbReference>
<dbReference type="GO" id="GO:0033017">
    <property type="term" value="C:sarcoplasmic reticulum membrane"/>
    <property type="evidence" value="ECO:0000250"/>
    <property type="project" value="UniProtKB"/>
</dbReference>
<dbReference type="GO" id="GO:0005524">
    <property type="term" value="F:ATP binding"/>
    <property type="evidence" value="ECO:0000250"/>
    <property type="project" value="UniProtKB"/>
</dbReference>
<dbReference type="GO" id="GO:0016887">
    <property type="term" value="F:ATP hydrolysis activity"/>
    <property type="evidence" value="ECO:0007669"/>
    <property type="project" value="InterPro"/>
</dbReference>
<dbReference type="GO" id="GO:0005509">
    <property type="term" value="F:calcium ion binding"/>
    <property type="evidence" value="ECO:0000250"/>
    <property type="project" value="UniProtKB"/>
</dbReference>
<dbReference type="GO" id="GO:0005388">
    <property type="term" value="F:P-type calcium transporter activity"/>
    <property type="evidence" value="ECO:0000250"/>
    <property type="project" value="UniProtKB"/>
</dbReference>
<dbReference type="GO" id="GO:1990036">
    <property type="term" value="P:calcium ion import into sarcoplasmic reticulum"/>
    <property type="evidence" value="ECO:0000250"/>
    <property type="project" value="UniProtKB"/>
</dbReference>
<dbReference type="GO" id="GO:0006816">
    <property type="term" value="P:calcium ion transport"/>
    <property type="evidence" value="ECO:0000250"/>
    <property type="project" value="UniProtKB"/>
</dbReference>
<dbReference type="GO" id="GO:0045988">
    <property type="term" value="P:negative regulation of striated muscle contraction"/>
    <property type="evidence" value="ECO:0000250"/>
    <property type="project" value="UniProtKB"/>
</dbReference>
<dbReference type="GO" id="GO:0031448">
    <property type="term" value="P:positive regulation of fast-twitch skeletal muscle fiber contraction"/>
    <property type="evidence" value="ECO:0000250"/>
    <property type="project" value="UniProtKB"/>
</dbReference>
<dbReference type="GO" id="GO:0006942">
    <property type="term" value="P:regulation of striated muscle contraction"/>
    <property type="evidence" value="ECO:0000250"/>
    <property type="project" value="UniProtKB"/>
</dbReference>
<dbReference type="CDD" id="cd02083">
    <property type="entry name" value="P-type_ATPase_SERCA"/>
    <property type="match status" value="1"/>
</dbReference>
<dbReference type="FunFam" id="3.40.1110.10:FF:000003">
    <property type="entry name" value="Calcium-transporting ATPase"/>
    <property type="match status" value="1"/>
</dbReference>
<dbReference type="FunFam" id="3.40.50.1000:FF:000005">
    <property type="entry name" value="Calcium-transporting ATPase 1"/>
    <property type="match status" value="1"/>
</dbReference>
<dbReference type="FunFam" id="1.20.1110.10:FF:000065">
    <property type="entry name" value="Sarcoplasmic/endoplasmic reticulum calcium ATPase 1"/>
    <property type="match status" value="3"/>
</dbReference>
<dbReference type="FunFam" id="2.70.150.10:FF:000160">
    <property type="entry name" value="Sarcoplasmic/endoplasmic reticulum calcium ATPase 1"/>
    <property type="match status" value="2"/>
</dbReference>
<dbReference type="Gene3D" id="3.40.1110.10">
    <property type="entry name" value="Calcium-transporting ATPase, cytoplasmic domain N"/>
    <property type="match status" value="1"/>
</dbReference>
<dbReference type="Gene3D" id="2.70.150.10">
    <property type="entry name" value="Calcium-transporting ATPase, cytoplasmic transduction domain A"/>
    <property type="match status" value="1"/>
</dbReference>
<dbReference type="Gene3D" id="1.20.1110.10">
    <property type="entry name" value="Calcium-transporting ATPase, transmembrane domain"/>
    <property type="match status" value="1"/>
</dbReference>
<dbReference type="Gene3D" id="3.40.50.1000">
    <property type="entry name" value="HAD superfamily/HAD-like"/>
    <property type="match status" value="1"/>
</dbReference>
<dbReference type="InterPro" id="IPR006068">
    <property type="entry name" value="ATPase_P-typ_cation-transptr_C"/>
</dbReference>
<dbReference type="InterPro" id="IPR004014">
    <property type="entry name" value="ATPase_P-typ_cation-transptr_N"/>
</dbReference>
<dbReference type="InterPro" id="IPR023299">
    <property type="entry name" value="ATPase_P-typ_cyto_dom_N"/>
</dbReference>
<dbReference type="InterPro" id="IPR018303">
    <property type="entry name" value="ATPase_P-typ_P_site"/>
</dbReference>
<dbReference type="InterPro" id="IPR023298">
    <property type="entry name" value="ATPase_P-typ_TM_dom_sf"/>
</dbReference>
<dbReference type="InterPro" id="IPR008250">
    <property type="entry name" value="ATPase_P-typ_transduc_dom_A_sf"/>
</dbReference>
<dbReference type="InterPro" id="IPR036412">
    <property type="entry name" value="HAD-like_sf"/>
</dbReference>
<dbReference type="InterPro" id="IPR023214">
    <property type="entry name" value="HAD_sf"/>
</dbReference>
<dbReference type="InterPro" id="IPR005782">
    <property type="entry name" value="P-type_ATPase_IIA"/>
</dbReference>
<dbReference type="InterPro" id="IPR001757">
    <property type="entry name" value="P_typ_ATPase"/>
</dbReference>
<dbReference type="InterPro" id="IPR044492">
    <property type="entry name" value="P_typ_ATPase_HD_dom"/>
</dbReference>
<dbReference type="NCBIfam" id="TIGR01116">
    <property type="entry name" value="ATPase-IIA1_Ca"/>
    <property type="match status" value="1"/>
</dbReference>
<dbReference type="NCBIfam" id="TIGR01494">
    <property type="entry name" value="ATPase_P-type"/>
    <property type="match status" value="2"/>
</dbReference>
<dbReference type="PANTHER" id="PTHR42861">
    <property type="entry name" value="CALCIUM-TRANSPORTING ATPASE"/>
    <property type="match status" value="1"/>
</dbReference>
<dbReference type="Pfam" id="PF13246">
    <property type="entry name" value="Cation_ATPase"/>
    <property type="match status" value="1"/>
</dbReference>
<dbReference type="Pfam" id="PF00689">
    <property type="entry name" value="Cation_ATPase_C"/>
    <property type="match status" value="1"/>
</dbReference>
<dbReference type="Pfam" id="PF00690">
    <property type="entry name" value="Cation_ATPase_N"/>
    <property type="match status" value="1"/>
</dbReference>
<dbReference type="Pfam" id="PF00122">
    <property type="entry name" value="E1-E2_ATPase"/>
    <property type="match status" value="1"/>
</dbReference>
<dbReference type="Pfam" id="PF00702">
    <property type="entry name" value="Hydrolase"/>
    <property type="match status" value="1"/>
</dbReference>
<dbReference type="PRINTS" id="PR00119">
    <property type="entry name" value="CATATPASE"/>
</dbReference>
<dbReference type="PRINTS" id="PR00120">
    <property type="entry name" value="HATPASE"/>
</dbReference>
<dbReference type="SFLD" id="SFLDG00002">
    <property type="entry name" value="C1.7:_P-type_atpase_like"/>
    <property type="match status" value="1"/>
</dbReference>
<dbReference type="SFLD" id="SFLDF00027">
    <property type="entry name" value="p-type_atpase"/>
    <property type="match status" value="1"/>
</dbReference>
<dbReference type="SMART" id="SM00831">
    <property type="entry name" value="Cation_ATPase_N"/>
    <property type="match status" value="1"/>
</dbReference>
<dbReference type="SUPFAM" id="SSF81653">
    <property type="entry name" value="Calcium ATPase, transduction domain A"/>
    <property type="match status" value="1"/>
</dbReference>
<dbReference type="SUPFAM" id="SSF81665">
    <property type="entry name" value="Calcium ATPase, transmembrane domain M"/>
    <property type="match status" value="1"/>
</dbReference>
<dbReference type="SUPFAM" id="SSF56784">
    <property type="entry name" value="HAD-like"/>
    <property type="match status" value="1"/>
</dbReference>
<dbReference type="SUPFAM" id="SSF81660">
    <property type="entry name" value="Metal cation-transporting ATPase, ATP-binding domain N"/>
    <property type="match status" value="1"/>
</dbReference>
<dbReference type="PROSITE" id="PS00154">
    <property type="entry name" value="ATPASE_E1_E2"/>
    <property type="match status" value="1"/>
</dbReference>
<name>AT2A1_PELLE</name>
<evidence type="ECO:0000250" key="1"/>
<evidence type="ECO:0000250" key="2">
    <source>
        <dbReference type="UniProtKB" id="O14983"/>
    </source>
</evidence>
<evidence type="ECO:0000250" key="3">
    <source>
        <dbReference type="UniProtKB" id="P04191"/>
    </source>
</evidence>
<evidence type="ECO:0000250" key="4">
    <source>
        <dbReference type="UniProtKB" id="Q8R429"/>
    </source>
</evidence>
<evidence type="ECO:0000305" key="5"/>
<gene>
    <name type="primary">ATP2A1</name>
</gene>
<accession>Q92105</accession>
<protein>
    <recommendedName>
        <fullName>Sarcoplasmic/endoplasmic reticulum calcium ATPase 1</fullName>
        <shortName>SERCA1</shortName>
        <shortName>SR Ca(2+)-ATPase 1</shortName>
        <ecNumber evidence="3">7.2.2.10</ecNumber>
    </recommendedName>
    <alternativeName>
        <fullName>Calcium pump 1</fullName>
    </alternativeName>
    <alternativeName>
        <fullName>Calcium-transporting ATPase sarcoplasmic reticulum type, fast twitch skeletal muscle isoform</fullName>
    </alternativeName>
    <alternativeName>
        <fullName>Endoplasmic reticulum class 1/2 Ca(2+) ATPase</fullName>
    </alternativeName>
</protein>
<reference key="1">
    <citation type="journal article" date="1992" name="FEBS Lett.">
        <title>Deduced amino acid sequence and E1-E2 equilibrium of the sarcoplasmic reticulum Ca(2+)-ATPase of frog skeletal muscle. Comparison with the Ca(2+)-ATPase of rabbit fast twitch muscle.</title>
        <authorList>
            <person name="Vilsen B."/>
            <person name="Andersen J.P."/>
        </authorList>
    </citation>
    <scope>NUCLEOTIDE SEQUENCE [MRNA]</scope>
    <source>
        <tissue>Fast-twitch skeletal muscle</tissue>
    </source>
</reference>
<organism>
    <name type="scientific">Pelophylax lessonae</name>
    <name type="common">Pool frog</name>
    <name type="synonym">Rana lessonae</name>
    <dbReference type="NCBI Taxonomy" id="45623"/>
    <lineage>
        <taxon>Eukaryota</taxon>
        <taxon>Metazoa</taxon>
        <taxon>Chordata</taxon>
        <taxon>Craniata</taxon>
        <taxon>Vertebrata</taxon>
        <taxon>Euteleostomi</taxon>
        <taxon>Amphibia</taxon>
        <taxon>Batrachia</taxon>
        <taxon>Anura</taxon>
        <taxon>Neobatrachia</taxon>
        <taxon>Ranoidea</taxon>
        <taxon>Ranidae</taxon>
        <taxon>Pelophylax</taxon>
    </lineage>
</organism>
<proteinExistence type="evidence at transcript level"/>